<organism>
    <name type="scientific">Mesoplasma florum (strain ATCC 33453 / NBRC 100688 / NCTC 11704 / L1)</name>
    <name type="common">Acholeplasma florum</name>
    <dbReference type="NCBI Taxonomy" id="265311"/>
    <lineage>
        <taxon>Bacteria</taxon>
        <taxon>Bacillati</taxon>
        <taxon>Mycoplasmatota</taxon>
        <taxon>Mollicutes</taxon>
        <taxon>Entomoplasmatales</taxon>
        <taxon>Entomoplasmataceae</taxon>
        <taxon>Mesoplasma</taxon>
    </lineage>
</organism>
<keyword id="KW-0963">Cytoplasm</keyword>
<keyword id="KW-0489">Methyltransferase</keyword>
<keyword id="KW-1185">Reference proteome</keyword>
<keyword id="KW-0698">rRNA processing</keyword>
<keyword id="KW-0949">S-adenosyl-L-methionine</keyword>
<keyword id="KW-0808">Transferase</keyword>
<proteinExistence type="inferred from homology"/>
<comment type="function">
    <text evidence="1">Specifically methylates the N4 position of cytidine in position 1402 (C1402) of 16S rRNA.</text>
</comment>
<comment type="catalytic activity">
    <reaction evidence="1">
        <text>cytidine(1402) in 16S rRNA + S-adenosyl-L-methionine = N(4)-methylcytidine(1402) in 16S rRNA + S-adenosyl-L-homocysteine + H(+)</text>
        <dbReference type="Rhea" id="RHEA:42928"/>
        <dbReference type="Rhea" id="RHEA-COMP:10286"/>
        <dbReference type="Rhea" id="RHEA-COMP:10287"/>
        <dbReference type="ChEBI" id="CHEBI:15378"/>
        <dbReference type="ChEBI" id="CHEBI:57856"/>
        <dbReference type="ChEBI" id="CHEBI:59789"/>
        <dbReference type="ChEBI" id="CHEBI:74506"/>
        <dbReference type="ChEBI" id="CHEBI:82748"/>
        <dbReference type="EC" id="2.1.1.199"/>
    </reaction>
</comment>
<comment type="subcellular location">
    <subcellularLocation>
        <location evidence="1">Cytoplasm</location>
    </subcellularLocation>
</comment>
<comment type="similarity">
    <text evidence="1">Belongs to the methyltransferase superfamily. RsmH family.</text>
</comment>
<feature type="chain" id="PRO_0000108655" description="Ribosomal RNA small subunit methyltransferase H">
    <location>
        <begin position="1"/>
        <end position="308"/>
    </location>
</feature>
<feature type="binding site" evidence="1">
    <location>
        <begin position="32"/>
        <end position="34"/>
    </location>
    <ligand>
        <name>S-adenosyl-L-methionine</name>
        <dbReference type="ChEBI" id="CHEBI:59789"/>
    </ligand>
</feature>
<feature type="binding site" evidence="1">
    <location>
        <position position="51"/>
    </location>
    <ligand>
        <name>S-adenosyl-L-methionine</name>
        <dbReference type="ChEBI" id="CHEBI:59789"/>
    </ligand>
</feature>
<feature type="binding site" evidence="1">
    <location>
        <position position="78"/>
    </location>
    <ligand>
        <name>S-adenosyl-L-methionine</name>
        <dbReference type="ChEBI" id="CHEBI:59789"/>
    </ligand>
</feature>
<feature type="binding site" evidence="1">
    <location>
        <position position="99"/>
    </location>
    <ligand>
        <name>S-adenosyl-L-methionine</name>
        <dbReference type="ChEBI" id="CHEBI:59789"/>
    </ligand>
</feature>
<feature type="binding site" evidence="1">
    <location>
        <position position="106"/>
    </location>
    <ligand>
        <name>S-adenosyl-L-methionine</name>
        <dbReference type="ChEBI" id="CHEBI:59789"/>
    </ligand>
</feature>
<reference key="1">
    <citation type="submission" date="2004-06" db="EMBL/GenBank/DDBJ databases">
        <authorList>
            <person name="Birren B.W."/>
            <person name="Stange-Thomann N."/>
            <person name="Hafez N."/>
            <person name="DeCaprio D."/>
            <person name="Fisher S."/>
            <person name="Butler J."/>
            <person name="Elkins T."/>
            <person name="Kodira C.D."/>
            <person name="Major J."/>
            <person name="Wang S."/>
            <person name="Nicol R."/>
            <person name="Nusbaum C."/>
        </authorList>
    </citation>
    <scope>NUCLEOTIDE SEQUENCE [LARGE SCALE GENOMIC DNA]</scope>
    <source>
        <strain>ATCC 33453 / NBRC 100688 / NCTC 11704 / L1</strain>
    </source>
</reference>
<sequence length="308" mass="35432">MEKHIPVLLKESIEYLNIKENGIYVDCTLGRAGHSSEILKKLKDGKLFSIDQDETAILEGTEKLTKISNNFKILEGNFVNISAMLAMQGIFEVDGILYDLGVSSPQFDVAERGFSYRFDGPLDMRMDRANNSLTAHKIVNEYTQEELEQILWNYGDEKFARSIAKNIILSRPINTTFELVSVIKKSLPAKILKQQKHPAKKTFQALRIRVNNEMETLESSLEQSLNLLKPKGRVVVITFHSLEEKVVKNIFKKYTLDEQQFYLSNLPYEIESSKDFKLLFKKPLKPTNTEVENNNRSHSAKLWVIEKK</sequence>
<dbReference type="EC" id="2.1.1.199" evidence="1"/>
<dbReference type="EMBL" id="AE017263">
    <property type="protein sequence ID" value="AAT75753.1"/>
    <property type="molecule type" value="Genomic_DNA"/>
</dbReference>
<dbReference type="RefSeq" id="WP_011183293.1">
    <property type="nucleotide sequence ID" value="NC_006055.1"/>
</dbReference>
<dbReference type="RefSeq" id="YP_053637.1">
    <property type="nucleotide sequence ID" value="NC_006055.1"/>
</dbReference>
<dbReference type="SMR" id="Q6F170"/>
<dbReference type="STRING" id="265311.Mfl394"/>
<dbReference type="PaxDb" id="265311-Mfl394"/>
<dbReference type="EnsemblBacteria" id="AAT75753">
    <property type="protein sequence ID" value="AAT75753"/>
    <property type="gene ID" value="Mfl394"/>
</dbReference>
<dbReference type="GeneID" id="2898025"/>
<dbReference type="KEGG" id="mfl:Mfl394"/>
<dbReference type="PATRIC" id="fig|265311.5.peg.394"/>
<dbReference type="eggNOG" id="COG0275">
    <property type="taxonomic scope" value="Bacteria"/>
</dbReference>
<dbReference type="HOGENOM" id="CLU_038422_2_0_14"/>
<dbReference type="OrthoDB" id="9806637at2"/>
<dbReference type="Proteomes" id="UP000006647">
    <property type="component" value="Chromosome"/>
</dbReference>
<dbReference type="GO" id="GO:0005737">
    <property type="term" value="C:cytoplasm"/>
    <property type="evidence" value="ECO:0007669"/>
    <property type="project" value="UniProtKB-SubCell"/>
</dbReference>
<dbReference type="GO" id="GO:0071424">
    <property type="term" value="F:rRNA (cytosine-N4-)-methyltransferase activity"/>
    <property type="evidence" value="ECO:0007669"/>
    <property type="project" value="UniProtKB-UniRule"/>
</dbReference>
<dbReference type="GO" id="GO:0070475">
    <property type="term" value="P:rRNA base methylation"/>
    <property type="evidence" value="ECO:0007669"/>
    <property type="project" value="UniProtKB-UniRule"/>
</dbReference>
<dbReference type="Gene3D" id="1.10.150.170">
    <property type="entry name" value="Putative methyltransferase TM0872, insert domain"/>
    <property type="match status" value="1"/>
</dbReference>
<dbReference type="Gene3D" id="3.40.50.150">
    <property type="entry name" value="Vaccinia Virus protein VP39"/>
    <property type="match status" value="1"/>
</dbReference>
<dbReference type="HAMAP" id="MF_01007">
    <property type="entry name" value="16SrRNA_methyltr_H"/>
    <property type="match status" value="1"/>
</dbReference>
<dbReference type="InterPro" id="IPR002903">
    <property type="entry name" value="RsmH"/>
</dbReference>
<dbReference type="InterPro" id="IPR023397">
    <property type="entry name" value="SAM-dep_MeTrfase_MraW_recog"/>
</dbReference>
<dbReference type="InterPro" id="IPR029063">
    <property type="entry name" value="SAM-dependent_MTases_sf"/>
</dbReference>
<dbReference type="NCBIfam" id="TIGR00006">
    <property type="entry name" value="16S rRNA (cytosine(1402)-N(4))-methyltransferase RsmH"/>
    <property type="match status" value="1"/>
</dbReference>
<dbReference type="PANTHER" id="PTHR11265:SF0">
    <property type="entry name" value="12S RRNA N4-METHYLCYTIDINE METHYLTRANSFERASE"/>
    <property type="match status" value="1"/>
</dbReference>
<dbReference type="PANTHER" id="PTHR11265">
    <property type="entry name" value="S-ADENOSYL-METHYLTRANSFERASE MRAW"/>
    <property type="match status" value="1"/>
</dbReference>
<dbReference type="Pfam" id="PF01795">
    <property type="entry name" value="Methyltransf_5"/>
    <property type="match status" value="1"/>
</dbReference>
<dbReference type="PIRSF" id="PIRSF004486">
    <property type="entry name" value="MraW"/>
    <property type="match status" value="1"/>
</dbReference>
<dbReference type="SUPFAM" id="SSF81799">
    <property type="entry name" value="Putative methyltransferase TM0872, insert domain"/>
    <property type="match status" value="1"/>
</dbReference>
<dbReference type="SUPFAM" id="SSF53335">
    <property type="entry name" value="S-adenosyl-L-methionine-dependent methyltransferases"/>
    <property type="match status" value="1"/>
</dbReference>
<protein>
    <recommendedName>
        <fullName evidence="1">Ribosomal RNA small subunit methyltransferase H</fullName>
        <ecNumber evidence="1">2.1.1.199</ecNumber>
    </recommendedName>
    <alternativeName>
        <fullName evidence="1">16S rRNA m(4)C1402 methyltransferase</fullName>
    </alternativeName>
    <alternativeName>
        <fullName evidence="1">rRNA (cytosine-N(4)-)-methyltransferase RsmH</fullName>
    </alternativeName>
</protein>
<name>RSMH_MESFL</name>
<gene>
    <name evidence="1" type="primary">rsmH</name>
    <name type="synonym">mraW</name>
    <name type="ordered locus">Mfl394</name>
</gene>
<evidence type="ECO:0000255" key="1">
    <source>
        <dbReference type="HAMAP-Rule" id="MF_01007"/>
    </source>
</evidence>
<accession>Q6F170</accession>